<evidence type="ECO:0000255" key="1">
    <source>
        <dbReference type="HAMAP-Rule" id="MF_01338"/>
    </source>
</evidence>
<sequence length="488" mass="53882">MSQAVESRTRIKSERYESGVIPYAKMGYWDPEYVIKDTDILALFRCTPQPGVDPVEAAAALAGESSTATWTVVWTDLLTACDLYRAKAFRVDPVPSAADTYFCYIAYDIDLFEEGSLANLTASIIGNIFGFKAVKALRLEDMRFPVALLKTYQGPATGVVVERERMDKFGRPLLGATVKPKLGLSGKNYGRVVFEGLKGGLDFLKDDENINSQPFMRYRERFLYSMEGVNHAACLTGEVKGHYLNTTAATMEDMYERANFARDLGSVIVMIDLVIGYTAIQSMGKWSRDNDVILHLHRAGNSTYSRQKNHGMNFRVICKWMRMSGCDHIHAGTVVGKLEGDPLMIKGFYNTLLDTKTEVNLPQGLFFAQDWASLRKCVPVASGGIHCGQMHQLINYLGDDVVLQFGGGTIGHPDGIQAGATANRVALECMVLARNEGRDYIAEGPQILRDAAKTCGPLQTALDLWKDITFNYASTDTADFVETATANV</sequence>
<name>RBL_EMIHU</name>
<accession>Q4G3F4</accession>
<protein>
    <recommendedName>
        <fullName evidence="1">Ribulose bisphosphate carboxylase large chain</fullName>
        <shortName evidence="1">RuBisCO large subunit</shortName>
        <ecNumber evidence="1">4.1.1.39</ecNumber>
    </recommendedName>
</protein>
<proteinExistence type="inferred from homology"/>
<organism>
    <name type="scientific">Emiliania huxleyi</name>
    <name type="common">Coccolithophore</name>
    <name type="synonym">Pontosphaera huxleyi</name>
    <dbReference type="NCBI Taxonomy" id="2903"/>
    <lineage>
        <taxon>Eukaryota</taxon>
        <taxon>Haptista</taxon>
        <taxon>Haptophyta</taxon>
        <taxon>Prymnesiophyceae</taxon>
        <taxon>Isochrysidales</taxon>
        <taxon>Noelaerhabdaceae</taxon>
        <taxon>Emiliania</taxon>
    </lineage>
</organism>
<geneLocation type="chloroplast"/>
<keyword id="KW-0113">Calvin cycle</keyword>
<keyword id="KW-0120">Carbon dioxide fixation</keyword>
<keyword id="KW-0150">Chloroplast</keyword>
<keyword id="KW-0456">Lyase</keyword>
<keyword id="KW-0460">Magnesium</keyword>
<keyword id="KW-0479">Metal-binding</keyword>
<keyword id="KW-0503">Monooxygenase</keyword>
<keyword id="KW-0560">Oxidoreductase</keyword>
<keyword id="KW-0601">Photorespiration</keyword>
<keyword id="KW-0602">Photosynthesis</keyword>
<keyword id="KW-0934">Plastid</keyword>
<dbReference type="EC" id="4.1.1.39" evidence="1"/>
<dbReference type="EMBL" id="AY741371">
    <property type="protein sequence ID" value="AAX13812.1"/>
    <property type="molecule type" value="Genomic_DNA"/>
</dbReference>
<dbReference type="RefSeq" id="YP_277313.1">
    <property type="nucleotide sequence ID" value="NC_007288.1"/>
</dbReference>
<dbReference type="SMR" id="Q4G3F4"/>
<dbReference type="STRING" id="2903.Q4G3F4"/>
<dbReference type="GeneID" id="3562548"/>
<dbReference type="GO" id="GO:0009507">
    <property type="term" value="C:chloroplast"/>
    <property type="evidence" value="ECO:0007669"/>
    <property type="project" value="UniProtKB-SubCell"/>
</dbReference>
<dbReference type="GO" id="GO:0000287">
    <property type="term" value="F:magnesium ion binding"/>
    <property type="evidence" value="ECO:0007669"/>
    <property type="project" value="UniProtKB-UniRule"/>
</dbReference>
<dbReference type="GO" id="GO:0004497">
    <property type="term" value="F:monooxygenase activity"/>
    <property type="evidence" value="ECO:0007669"/>
    <property type="project" value="UniProtKB-KW"/>
</dbReference>
<dbReference type="GO" id="GO:0016984">
    <property type="term" value="F:ribulose-bisphosphate carboxylase activity"/>
    <property type="evidence" value="ECO:0007669"/>
    <property type="project" value="UniProtKB-UniRule"/>
</dbReference>
<dbReference type="GO" id="GO:0019253">
    <property type="term" value="P:reductive pentose-phosphate cycle"/>
    <property type="evidence" value="ECO:0007669"/>
    <property type="project" value="UniProtKB-UniRule"/>
</dbReference>
<dbReference type="CDD" id="cd08212">
    <property type="entry name" value="RuBisCO_large_I"/>
    <property type="match status" value="1"/>
</dbReference>
<dbReference type="Gene3D" id="3.20.20.110">
    <property type="entry name" value="Ribulose bisphosphate carboxylase, large subunit, C-terminal domain"/>
    <property type="match status" value="1"/>
</dbReference>
<dbReference type="Gene3D" id="3.30.70.150">
    <property type="entry name" value="RuBisCO large subunit, N-terminal domain"/>
    <property type="match status" value="1"/>
</dbReference>
<dbReference type="HAMAP" id="MF_01338">
    <property type="entry name" value="RuBisCO_L_type1"/>
    <property type="match status" value="1"/>
</dbReference>
<dbReference type="InterPro" id="IPR033966">
    <property type="entry name" value="RuBisCO"/>
</dbReference>
<dbReference type="InterPro" id="IPR020878">
    <property type="entry name" value="RuBisCo_large_chain_AS"/>
</dbReference>
<dbReference type="InterPro" id="IPR000685">
    <property type="entry name" value="RuBisCO_lsu_C"/>
</dbReference>
<dbReference type="InterPro" id="IPR036376">
    <property type="entry name" value="RuBisCO_lsu_C_sf"/>
</dbReference>
<dbReference type="InterPro" id="IPR017443">
    <property type="entry name" value="RuBisCO_lsu_fd_N"/>
</dbReference>
<dbReference type="InterPro" id="IPR036422">
    <property type="entry name" value="RuBisCO_lsu_N_sf"/>
</dbReference>
<dbReference type="InterPro" id="IPR020888">
    <property type="entry name" value="RuBisCO_lsuI"/>
</dbReference>
<dbReference type="NCBIfam" id="NF003252">
    <property type="entry name" value="PRK04208.1"/>
    <property type="match status" value="1"/>
</dbReference>
<dbReference type="PANTHER" id="PTHR42704">
    <property type="entry name" value="RIBULOSE BISPHOSPHATE CARBOXYLASE"/>
    <property type="match status" value="1"/>
</dbReference>
<dbReference type="PANTHER" id="PTHR42704:SF17">
    <property type="entry name" value="RIBULOSE BISPHOSPHATE CARBOXYLASE LARGE CHAIN"/>
    <property type="match status" value="1"/>
</dbReference>
<dbReference type="Pfam" id="PF00016">
    <property type="entry name" value="RuBisCO_large"/>
    <property type="match status" value="1"/>
</dbReference>
<dbReference type="Pfam" id="PF02788">
    <property type="entry name" value="RuBisCO_large_N"/>
    <property type="match status" value="1"/>
</dbReference>
<dbReference type="SFLD" id="SFLDG01052">
    <property type="entry name" value="RuBisCO"/>
    <property type="match status" value="1"/>
</dbReference>
<dbReference type="SFLD" id="SFLDS00014">
    <property type="entry name" value="RuBisCO"/>
    <property type="match status" value="1"/>
</dbReference>
<dbReference type="SFLD" id="SFLDG00301">
    <property type="entry name" value="RuBisCO-like_proteins"/>
    <property type="match status" value="1"/>
</dbReference>
<dbReference type="SUPFAM" id="SSF51649">
    <property type="entry name" value="RuBisCo, C-terminal domain"/>
    <property type="match status" value="1"/>
</dbReference>
<dbReference type="SUPFAM" id="SSF54966">
    <property type="entry name" value="RuBisCO, large subunit, small (N-terminal) domain"/>
    <property type="match status" value="1"/>
</dbReference>
<dbReference type="PROSITE" id="PS00157">
    <property type="entry name" value="RUBISCO_LARGE"/>
    <property type="match status" value="1"/>
</dbReference>
<gene>
    <name evidence="1" type="primary">rbcL</name>
</gene>
<feature type="chain" id="PRO_0000062456" description="Ribulose bisphosphate carboxylase large chain">
    <location>
        <begin position="1"/>
        <end position="488"/>
    </location>
</feature>
<feature type="active site" description="Proton acceptor" evidence="1">
    <location>
        <position position="179"/>
    </location>
</feature>
<feature type="active site" description="Proton acceptor" evidence="1">
    <location>
        <position position="297"/>
    </location>
</feature>
<feature type="binding site" description="in homodimeric partner" evidence="1">
    <location>
        <position position="127"/>
    </location>
    <ligand>
        <name>substrate</name>
    </ligand>
</feature>
<feature type="binding site" evidence="1">
    <location>
        <position position="177"/>
    </location>
    <ligand>
        <name>substrate</name>
    </ligand>
</feature>
<feature type="binding site" evidence="1">
    <location>
        <position position="181"/>
    </location>
    <ligand>
        <name>substrate</name>
    </ligand>
</feature>
<feature type="binding site" description="via carbamate group" evidence="1">
    <location>
        <position position="205"/>
    </location>
    <ligand>
        <name>Mg(2+)</name>
        <dbReference type="ChEBI" id="CHEBI:18420"/>
    </ligand>
</feature>
<feature type="binding site" evidence="1">
    <location>
        <position position="207"/>
    </location>
    <ligand>
        <name>Mg(2+)</name>
        <dbReference type="ChEBI" id="CHEBI:18420"/>
    </ligand>
</feature>
<feature type="binding site" evidence="1">
    <location>
        <position position="208"/>
    </location>
    <ligand>
        <name>Mg(2+)</name>
        <dbReference type="ChEBI" id="CHEBI:18420"/>
    </ligand>
</feature>
<feature type="binding site" evidence="1">
    <location>
        <position position="298"/>
    </location>
    <ligand>
        <name>substrate</name>
    </ligand>
</feature>
<feature type="binding site" evidence="1">
    <location>
        <position position="330"/>
    </location>
    <ligand>
        <name>substrate</name>
    </ligand>
</feature>
<feature type="binding site" evidence="1">
    <location>
        <position position="382"/>
    </location>
    <ligand>
        <name>substrate</name>
    </ligand>
</feature>
<feature type="site" description="Transition state stabilizer" evidence="1">
    <location>
        <position position="337"/>
    </location>
</feature>
<feature type="modified residue" description="N6-carboxylysine" evidence="1">
    <location>
        <position position="205"/>
    </location>
</feature>
<reference key="1">
    <citation type="journal article" date="2005" name="DNA Res.">
        <title>The complete plastid genome sequence of the haptophyte Emiliania huxleyi: a comparison to other plastid genomes.</title>
        <authorList>
            <person name="Sanchez-Puerta M.V."/>
            <person name="Bachvaroff T.R."/>
            <person name="Delwiche C.F."/>
        </authorList>
    </citation>
    <scope>NUCLEOTIDE SEQUENCE [LARGE SCALE GENOMIC DNA]</scope>
    <source>
        <strain>CCMP373 / CSIRO-CS-57 / BT6</strain>
    </source>
</reference>
<comment type="function">
    <text evidence="1">RuBisCO catalyzes two reactions: the carboxylation of D-ribulose 1,5-bisphosphate, the primary event in carbon dioxide fixation, as well as the oxidative fragmentation of the pentose substrate in the photorespiration process. Both reactions occur simultaneously and in competition at the same active site.</text>
</comment>
<comment type="catalytic activity">
    <reaction evidence="1">
        <text>2 (2R)-3-phosphoglycerate + 2 H(+) = D-ribulose 1,5-bisphosphate + CO2 + H2O</text>
        <dbReference type="Rhea" id="RHEA:23124"/>
        <dbReference type="ChEBI" id="CHEBI:15377"/>
        <dbReference type="ChEBI" id="CHEBI:15378"/>
        <dbReference type="ChEBI" id="CHEBI:16526"/>
        <dbReference type="ChEBI" id="CHEBI:57870"/>
        <dbReference type="ChEBI" id="CHEBI:58272"/>
        <dbReference type="EC" id="4.1.1.39"/>
    </reaction>
</comment>
<comment type="catalytic activity">
    <reaction evidence="1">
        <text>D-ribulose 1,5-bisphosphate + O2 = 2-phosphoglycolate + (2R)-3-phosphoglycerate + 2 H(+)</text>
        <dbReference type="Rhea" id="RHEA:36631"/>
        <dbReference type="ChEBI" id="CHEBI:15378"/>
        <dbReference type="ChEBI" id="CHEBI:15379"/>
        <dbReference type="ChEBI" id="CHEBI:57870"/>
        <dbReference type="ChEBI" id="CHEBI:58033"/>
        <dbReference type="ChEBI" id="CHEBI:58272"/>
    </reaction>
</comment>
<comment type="cofactor">
    <cofactor evidence="1">
        <name>Mg(2+)</name>
        <dbReference type="ChEBI" id="CHEBI:18420"/>
    </cofactor>
    <text evidence="1">Binds 1 Mg(2+) ion per subunit.</text>
</comment>
<comment type="subunit">
    <text evidence="1">Heterohexadecamer of 8 large chains and 8 small chains.</text>
</comment>
<comment type="subcellular location">
    <subcellularLocation>
        <location>Plastid</location>
        <location>Chloroplast</location>
    </subcellularLocation>
</comment>
<comment type="miscellaneous">
    <text evidence="1">The basic functional RuBisCO is composed of a large chain homodimer in a 'head-to-tail' conformation. In form I RuBisCO this homodimer is arranged in a barrel-like tetramer with the small subunits forming a tetrameric 'cap' on each end of the 'barrel'.</text>
</comment>
<comment type="similarity">
    <text evidence="1">Belongs to the RuBisCO large chain family. Type I subfamily.</text>
</comment>